<organism>
    <name type="scientific">Methanoculleus marisnigri (strain ATCC 35101 / DSM 1498 / JR1)</name>
    <dbReference type="NCBI Taxonomy" id="368407"/>
    <lineage>
        <taxon>Archaea</taxon>
        <taxon>Methanobacteriati</taxon>
        <taxon>Methanobacteriota</taxon>
        <taxon>Stenosarchaea group</taxon>
        <taxon>Methanomicrobia</taxon>
        <taxon>Methanomicrobiales</taxon>
        <taxon>Methanomicrobiaceae</taxon>
        <taxon>Methanoculleus</taxon>
    </lineage>
</organism>
<evidence type="ECO:0000255" key="1">
    <source>
        <dbReference type="HAMAP-Rule" id="MF_01518"/>
    </source>
</evidence>
<sequence>MDFGVKDGRIIGFGEYRGTREYDLSGAYVVPGLIDAHVHIESSLLAPAEYARLVLAHGTTTVIADPHEIANVCGAPGIDYMLAQGARTPLDILVMLPSCVPATPFDAGGAVLTAADLARFRGREGVVGLAEVMNVPGVLFGDEDLRAKMDLFEVVDGHAPFLSGKDLNAYIYAGVQSDHECTALPEAREKLLRGMYVMIREGSTERNLHDLLPLVDACTAPRCCFATDDRHADMLAGEGHIDDCVRKAVSGGLEVEQALRMATLSAAGRFGLHDRGALAPGRLADFCVADDPDRFRVLRTFKRGVEVVDAGYLPPACPKSPMHARVPEPGDIRITGRGEARVIEIVPGQITTRDLRYPVDAAGIPDLDRDILKAVVIDRYRATGSGVGLVHGFHLQEGAIAGSVSHDSHNIVAVGAGDADIVRAVAEVVRLGGGLAVVSGDDITALPLECAGLMSALPYDEVVRRLAALEEHARRLGAIANPFMYLSFLALTVIPEVRVTERGVFDVGAFTDVPLFEE</sequence>
<protein>
    <recommendedName>
        <fullName evidence="1">Adenine deaminase</fullName>
        <shortName evidence="1">Adenase</shortName>
        <shortName evidence="1">Adenine aminase</shortName>
        <ecNumber evidence="1">3.5.4.2</ecNumber>
    </recommendedName>
</protein>
<dbReference type="EC" id="3.5.4.2" evidence="1"/>
<dbReference type="EMBL" id="CP000562">
    <property type="protein sequence ID" value="ABN57468.1"/>
    <property type="molecule type" value="Genomic_DNA"/>
</dbReference>
<dbReference type="SMR" id="A3CVR8"/>
<dbReference type="STRING" id="368407.Memar_1539"/>
<dbReference type="KEGG" id="mem:Memar_1539"/>
<dbReference type="eggNOG" id="arCOG00693">
    <property type="taxonomic scope" value="Archaea"/>
</dbReference>
<dbReference type="HOGENOM" id="CLU_027935_0_0_2"/>
<dbReference type="Proteomes" id="UP000002146">
    <property type="component" value="Chromosome"/>
</dbReference>
<dbReference type="GO" id="GO:0000034">
    <property type="term" value="F:adenine deaminase activity"/>
    <property type="evidence" value="ECO:0007669"/>
    <property type="project" value="UniProtKB-UniRule"/>
</dbReference>
<dbReference type="GO" id="GO:0006146">
    <property type="term" value="P:adenine catabolic process"/>
    <property type="evidence" value="ECO:0007669"/>
    <property type="project" value="InterPro"/>
</dbReference>
<dbReference type="CDD" id="cd01295">
    <property type="entry name" value="AdeC"/>
    <property type="match status" value="1"/>
</dbReference>
<dbReference type="Gene3D" id="3.20.20.140">
    <property type="entry name" value="Metal-dependent hydrolases"/>
    <property type="match status" value="1"/>
</dbReference>
<dbReference type="Gene3D" id="2.30.40.10">
    <property type="entry name" value="Urease, subunit C, domain 1"/>
    <property type="match status" value="1"/>
</dbReference>
<dbReference type="HAMAP" id="MF_01518">
    <property type="entry name" value="Adenine_deamin"/>
    <property type="match status" value="1"/>
</dbReference>
<dbReference type="InterPro" id="IPR006679">
    <property type="entry name" value="Adenine_deam"/>
</dbReference>
<dbReference type="InterPro" id="IPR026912">
    <property type="entry name" value="Adenine_deam_C"/>
</dbReference>
<dbReference type="InterPro" id="IPR006680">
    <property type="entry name" value="Amidohydro-rel"/>
</dbReference>
<dbReference type="InterPro" id="IPR011059">
    <property type="entry name" value="Metal-dep_hydrolase_composite"/>
</dbReference>
<dbReference type="InterPro" id="IPR032466">
    <property type="entry name" value="Metal_Hydrolase"/>
</dbReference>
<dbReference type="NCBIfam" id="TIGR01178">
    <property type="entry name" value="ade"/>
    <property type="match status" value="1"/>
</dbReference>
<dbReference type="PANTHER" id="PTHR11113:SF2">
    <property type="entry name" value="ADENINE DEAMINASE"/>
    <property type="match status" value="1"/>
</dbReference>
<dbReference type="PANTHER" id="PTHR11113">
    <property type="entry name" value="N-ACETYLGLUCOSAMINE-6-PHOSPHATE DEACETYLASE"/>
    <property type="match status" value="1"/>
</dbReference>
<dbReference type="Pfam" id="PF13382">
    <property type="entry name" value="Adenine_deam_C"/>
    <property type="match status" value="1"/>
</dbReference>
<dbReference type="Pfam" id="PF01979">
    <property type="entry name" value="Amidohydro_1"/>
    <property type="match status" value="1"/>
</dbReference>
<dbReference type="SUPFAM" id="SSF51338">
    <property type="entry name" value="Composite domain of metallo-dependent hydrolases"/>
    <property type="match status" value="1"/>
</dbReference>
<dbReference type="SUPFAM" id="SSF51556">
    <property type="entry name" value="Metallo-dependent hydrolases"/>
    <property type="match status" value="1"/>
</dbReference>
<keyword id="KW-0378">Hydrolase</keyword>
<keyword id="KW-0464">Manganese</keyword>
<feature type="chain" id="PRO_0000292403" description="Adenine deaminase">
    <location>
        <begin position="1"/>
        <end position="518"/>
    </location>
</feature>
<name>ADEC_METMJ</name>
<reference key="1">
    <citation type="journal article" date="2009" name="Stand. Genomic Sci.">
        <title>Complete genome sequence of Methanoculleus marisnigri Romesser et al. 1981 type strain JR1.</title>
        <authorList>
            <person name="Anderson I.J."/>
            <person name="Sieprawska-Lupa M."/>
            <person name="Lapidus A."/>
            <person name="Nolan M."/>
            <person name="Copeland A."/>
            <person name="Glavina Del Rio T."/>
            <person name="Tice H."/>
            <person name="Dalin E."/>
            <person name="Barry K."/>
            <person name="Saunders E."/>
            <person name="Han C."/>
            <person name="Brettin T."/>
            <person name="Detter J.C."/>
            <person name="Bruce D."/>
            <person name="Mikhailova N."/>
            <person name="Pitluck S."/>
            <person name="Hauser L."/>
            <person name="Land M."/>
            <person name="Lucas S."/>
            <person name="Richardson P."/>
            <person name="Whitman W.B."/>
            <person name="Kyrpides N.C."/>
        </authorList>
    </citation>
    <scope>NUCLEOTIDE SEQUENCE [LARGE SCALE GENOMIC DNA]</scope>
    <source>
        <strain>ATCC 35101 / DSM 1498 / JR1</strain>
    </source>
</reference>
<comment type="catalytic activity">
    <reaction evidence="1">
        <text>adenine + H2O + H(+) = hypoxanthine + NH4(+)</text>
        <dbReference type="Rhea" id="RHEA:23688"/>
        <dbReference type="ChEBI" id="CHEBI:15377"/>
        <dbReference type="ChEBI" id="CHEBI:15378"/>
        <dbReference type="ChEBI" id="CHEBI:16708"/>
        <dbReference type="ChEBI" id="CHEBI:17368"/>
        <dbReference type="ChEBI" id="CHEBI:28938"/>
        <dbReference type="EC" id="3.5.4.2"/>
    </reaction>
</comment>
<comment type="cofactor">
    <cofactor evidence="1">
        <name>Mn(2+)</name>
        <dbReference type="ChEBI" id="CHEBI:29035"/>
    </cofactor>
</comment>
<comment type="similarity">
    <text evidence="1">Belongs to the metallo-dependent hydrolases superfamily. Adenine deaminase family.</text>
</comment>
<proteinExistence type="inferred from homology"/>
<accession>A3CVR8</accession>
<gene>
    <name evidence="1" type="primary">ade</name>
    <name type="ordered locus">Memar_1539</name>
</gene>